<gene>
    <name evidence="1" type="primary">atpF</name>
    <name type="ordered locus">YPDSF_3910</name>
</gene>
<dbReference type="EMBL" id="CP000668">
    <property type="protein sequence ID" value="ABP42251.1"/>
    <property type="molecule type" value="Genomic_DNA"/>
</dbReference>
<dbReference type="RefSeq" id="WP_002220762.1">
    <property type="nucleotide sequence ID" value="NZ_CP009715.1"/>
</dbReference>
<dbReference type="SMR" id="A4TSI9"/>
<dbReference type="GeneID" id="57974599"/>
<dbReference type="KEGG" id="ypp:YPDSF_3910"/>
<dbReference type="PATRIC" id="fig|386656.14.peg.607"/>
<dbReference type="GO" id="GO:0005886">
    <property type="term" value="C:plasma membrane"/>
    <property type="evidence" value="ECO:0007669"/>
    <property type="project" value="UniProtKB-SubCell"/>
</dbReference>
<dbReference type="GO" id="GO:0045259">
    <property type="term" value="C:proton-transporting ATP synthase complex"/>
    <property type="evidence" value="ECO:0007669"/>
    <property type="project" value="UniProtKB-KW"/>
</dbReference>
<dbReference type="GO" id="GO:0046933">
    <property type="term" value="F:proton-transporting ATP synthase activity, rotational mechanism"/>
    <property type="evidence" value="ECO:0007669"/>
    <property type="project" value="UniProtKB-UniRule"/>
</dbReference>
<dbReference type="GO" id="GO:0046961">
    <property type="term" value="F:proton-transporting ATPase activity, rotational mechanism"/>
    <property type="evidence" value="ECO:0007669"/>
    <property type="project" value="TreeGrafter"/>
</dbReference>
<dbReference type="CDD" id="cd06503">
    <property type="entry name" value="ATP-synt_Fo_b"/>
    <property type="match status" value="1"/>
</dbReference>
<dbReference type="FunFam" id="1.20.5.620:FF:000001">
    <property type="entry name" value="ATP synthase subunit b"/>
    <property type="match status" value="1"/>
</dbReference>
<dbReference type="Gene3D" id="1.20.5.620">
    <property type="entry name" value="F1F0 ATP synthase subunit B, membrane domain"/>
    <property type="match status" value="1"/>
</dbReference>
<dbReference type="HAMAP" id="MF_01398">
    <property type="entry name" value="ATP_synth_b_bprime"/>
    <property type="match status" value="1"/>
</dbReference>
<dbReference type="InterPro" id="IPR028987">
    <property type="entry name" value="ATP_synth_B-like_membr_sf"/>
</dbReference>
<dbReference type="InterPro" id="IPR002146">
    <property type="entry name" value="ATP_synth_b/b'su_bac/chlpt"/>
</dbReference>
<dbReference type="InterPro" id="IPR005864">
    <property type="entry name" value="ATP_synth_F0_bsu_bac"/>
</dbReference>
<dbReference type="InterPro" id="IPR050059">
    <property type="entry name" value="ATP_synthase_B_chain"/>
</dbReference>
<dbReference type="NCBIfam" id="TIGR01144">
    <property type="entry name" value="ATP_synt_b"/>
    <property type="match status" value="1"/>
</dbReference>
<dbReference type="NCBIfam" id="NF004411">
    <property type="entry name" value="PRK05759.1-2"/>
    <property type="match status" value="1"/>
</dbReference>
<dbReference type="NCBIfam" id="NF004413">
    <property type="entry name" value="PRK05759.1-4"/>
    <property type="match status" value="1"/>
</dbReference>
<dbReference type="PANTHER" id="PTHR33445:SF1">
    <property type="entry name" value="ATP SYNTHASE SUBUNIT B"/>
    <property type="match status" value="1"/>
</dbReference>
<dbReference type="PANTHER" id="PTHR33445">
    <property type="entry name" value="ATP SYNTHASE SUBUNIT B', CHLOROPLASTIC"/>
    <property type="match status" value="1"/>
</dbReference>
<dbReference type="Pfam" id="PF00430">
    <property type="entry name" value="ATP-synt_B"/>
    <property type="match status" value="1"/>
</dbReference>
<dbReference type="SUPFAM" id="SSF81573">
    <property type="entry name" value="F1F0 ATP synthase subunit B, membrane domain"/>
    <property type="match status" value="1"/>
</dbReference>
<protein>
    <recommendedName>
        <fullName evidence="1">ATP synthase subunit b</fullName>
    </recommendedName>
    <alternativeName>
        <fullName evidence="1">ATP synthase F(0) sector subunit b</fullName>
    </alternativeName>
    <alternativeName>
        <fullName evidence="1">ATPase subunit I</fullName>
    </alternativeName>
    <alternativeName>
        <fullName evidence="1">F-type ATPase subunit b</fullName>
        <shortName evidence="1">F-ATPase subunit b</shortName>
    </alternativeName>
</protein>
<feature type="chain" id="PRO_0000368879" description="ATP synthase subunit b">
    <location>
        <begin position="1"/>
        <end position="156"/>
    </location>
</feature>
<feature type="transmembrane region" description="Helical" evidence="1">
    <location>
        <begin position="11"/>
        <end position="31"/>
    </location>
</feature>
<sequence>MNLNATILGQAIAFVLFVIFCMKYVWPPIMAAIEKRQQEIADGLSSAERAKKDLDLAQANATDQLKKAKAEAQVIIEQASKRKAQILDEAKAEAEQERNKIVAQAQAEIDAERKRAREELRKQVAMLAIAGAEKIIERSVDEAANSDIVDKLVAEL</sequence>
<accession>A4TSI9</accession>
<keyword id="KW-0066">ATP synthesis</keyword>
<keyword id="KW-0997">Cell inner membrane</keyword>
<keyword id="KW-1003">Cell membrane</keyword>
<keyword id="KW-0138">CF(0)</keyword>
<keyword id="KW-0375">Hydrogen ion transport</keyword>
<keyword id="KW-0406">Ion transport</keyword>
<keyword id="KW-0472">Membrane</keyword>
<keyword id="KW-0812">Transmembrane</keyword>
<keyword id="KW-1133">Transmembrane helix</keyword>
<keyword id="KW-0813">Transport</keyword>
<reference key="1">
    <citation type="submission" date="2007-02" db="EMBL/GenBank/DDBJ databases">
        <title>Complete sequence of chromosome of Yersinia pestis Pestoides F.</title>
        <authorList>
            <consortium name="US DOE Joint Genome Institute"/>
            <person name="Copeland A."/>
            <person name="Lucas S."/>
            <person name="Lapidus A."/>
            <person name="Barry K."/>
            <person name="Detter J.C."/>
            <person name="Glavina del Rio T."/>
            <person name="Hammon N."/>
            <person name="Israni S."/>
            <person name="Dalin E."/>
            <person name="Tice H."/>
            <person name="Pitluck S."/>
            <person name="Di Bartolo G."/>
            <person name="Chain P."/>
            <person name="Malfatti S."/>
            <person name="Shin M."/>
            <person name="Vergez L."/>
            <person name="Schmutz J."/>
            <person name="Larimer F."/>
            <person name="Land M."/>
            <person name="Hauser L."/>
            <person name="Worsham P."/>
            <person name="Chu M."/>
            <person name="Bearden S."/>
            <person name="Garcia E."/>
            <person name="Richardson P."/>
        </authorList>
    </citation>
    <scope>NUCLEOTIDE SEQUENCE [LARGE SCALE GENOMIC DNA]</scope>
    <source>
        <strain>Pestoides F</strain>
    </source>
</reference>
<name>ATPF_YERPP</name>
<evidence type="ECO:0000255" key="1">
    <source>
        <dbReference type="HAMAP-Rule" id="MF_01398"/>
    </source>
</evidence>
<organism>
    <name type="scientific">Yersinia pestis (strain Pestoides F)</name>
    <dbReference type="NCBI Taxonomy" id="386656"/>
    <lineage>
        <taxon>Bacteria</taxon>
        <taxon>Pseudomonadati</taxon>
        <taxon>Pseudomonadota</taxon>
        <taxon>Gammaproteobacteria</taxon>
        <taxon>Enterobacterales</taxon>
        <taxon>Yersiniaceae</taxon>
        <taxon>Yersinia</taxon>
    </lineage>
</organism>
<comment type="function">
    <text evidence="1">F(1)F(0) ATP synthase produces ATP from ADP in the presence of a proton or sodium gradient. F-type ATPases consist of two structural domains, F(1) containing the extramembraneous catalytic core and F(0) containing the membrane proton channel, linked together by a central stalk and a peripheral stalk. During catalysis, ATP synthesis in the catalytic domain of F(1) is coupled via a rotary mechanism of the central stalk subunits to proton translocation.</text>
</comment>
<comment type="function">
    <text evidence="1">Component of the F(0) channel, it forms part of the peripheral stalk, linking F(1) to F(0).</text>
</comment>
<comment type="subunit">
    <text evidence="1">F-type ATPases have 2 components, F(1) - the catalytic core - and F(0) - the membrane proton channel. F(1) has five subunits: alpha(3), beta(3), gamma(1), delta(1), epsilon(1). F(0) has three main subunits: a(1), b(2) and c(10-14). The alpha and beta chains form an alternating ring which encloses part of the gamma chain. F(1) is attached to F(0) by a central stalk formed by the gamma and epsilon chains, while a peripheral stalk is formed by the delta and b chains.</text>
</comment>
<comment type="subcellular location">
    <subcellularLocation>
        <location evidence="1">Cell inner membrane</location>
        <topology evidence="1">Single-pass membrane protein</topology>
    </subcellularLocation>
</comment>
<comment type="similarity">
    <text evidence="1">Belongs to the ATPase B chain family.</text>
</comment>
<proteinExistence type="inferred from homology"/>